<organism>
    <name type="scientific">Daboia siamensis</name>
    <name type="common">Eastern Russel's viper</name>
    <name type="synonym">Daboia russelii siamensis</name>
    <dbReference type="NCBI Taxonomy" id="343250"/>
    <lineage>
        <taxon>Eukaryota</taxon>
        <taxon>Metazoa</taxon>
        <taxon>Chordata</taxon>
        <taxon>Craniata</taxon>
        <taxon>Vertebrata</taxon>
        <taxon>Euteleostomi</taxon>
        <taxon>Lepidosauria</taxon>
        <taxon>Squamata</taxon>
        <taxon>Bifurcata</taxon>
        <taxon>Unidentata</taxon>
        <taxon>Episquamata</taxon>
        <taxon>Toxicofera</taxon>
        <taxon>Serpentes</taxon>
        <taxon>Colubroidea</taxon>
        <taxon>Viperidae</taxon>
        <taxon>Viperinae</taxon>
        <taxon>Daboia</taxon>
    </lineage>
</organism>
<sequence>MVLIRVLANLLVLQLSYAQKSSELVVGGHPCNIYEHHFLAFMYNSSGFMCSGTLINQQWVLSAAHCDMENMHIYLGLHSFKLPNKDQKKRVAKEKFFCLSSKSYTKWDKDIMLIKLNKPVTYSTHIASLSLPSNPPRVGSVCRIMGWGSITSPKKILPFVPHCANINIVPYTVCRVIYRPLPEQSRTLCAGVSGRRIGSCLGDSGGPLICNGQIQGIVSWGSDPCVNRGAPSIYTKVFDYTDWIHSIIAGNTAATCPS</sequence>
<dbReference type="EC" id="3.4.21.-"/>
<dbReference type="EMBL" id="HQ270464">
    <property type="protein sequence ID" value="ADP88559.1"/>
    <property type="molecule type" value="mRNA"/>
</dbReference>
<dbReference type="SMR" id="E5L0E3"/>
<dbReference type="GO" id="GO:0005576">
    <property type="term" value="C:extracellular region"/>
    <property type="evidence" value="ECO:0007669"/>
    <property type="project" value="UniProtKB-SubCell"/>
</dbReference>
<dbReference type="GO" id="GO:0030141">
    <property type="term" value="C:secretory granule"/>
    <property type="evidence" value="ECO:0007669"/>
    <property type="project" value="TreeGrafter"/>
</dbReference>
<dbReference type="GO" id="GO:0004252">
    <property type="term" value="F:serine-type endopeptidase activity"/>
    <property type="evidence" value="ECO:0007669"/>
    <property type="project" value="InterPro"/>
</dbReference>
<dbReference type="GO" id="GO:0090729">
    <property type="term" value="F:toxin activity"/>
    <property type="evidence" value="ECO:0007669"/>
    <property type="project" value="UniProtKB-KW"/>
</dbReference>
<dbReference type="GO" id="GO:0006508">
    <property type="term" value="P:proteolysis"/>
    <property type="evidence" value="ECO:0007669"/>
    <property type="project" value="UniProtKB-KW"/>
</dbReference>
<dbReference type="CDD" id="cd00190">
    <property type="entry name" value="Tryp_SPc"/>
    <property type="match status" value="1"/>
</dbReference>
<dbReference type="FunFam" id="2.40.10.10:FF:000010">
    <property type="entry name" value="Kallikrein related peptidase 11"/>
    <property type="match status" value="1"/>
</dbReference>
<dbReference type="Gene3D" id="2.40.10.10">
    <property type="entry name" value="Trypsin-like serine proteases"/>
    <property type="match status" value="2"/>
</dbReference>
<dbReference type="InterPro" id="IPR009003">
    <property type="entry name" value="Peptidase_S1_PA"/>
</dbReference>
<dbReference type="InterPro" id="IPR043504">
    <property type="entry name" value="Peptidase_S1_PA_chymotrypsin"/>
</dbReference>
<dbReference type="InterPro" id="IPR001314">
    <property type="entry name" value="Peptidase_S1A"/>
</dbReference>
<dbReference type="InterPro" id="IPR001254">
    <property type="entry name" value="Trypsin_dom"/>
</dbReference>
<dbReference type="InterPro" id="IPR018114">
    <property type="entry name" value="TRYPSIN_HIS"/>
</dbReference>
<dbReference type="InterPro" id="IPR033116">
    <property type="entry name" value="TRYPSIN_SER"/>
</dbReference>
<dbReference type="PANTHER" id="PTHR24271:SF47">
    <property type="entry name" value="KALLIKREIN-1"/>
    <property type="match status" value="1"/>
</dbReference>
<dbReference type="PANTHER" id="PTHR24271">
    <property type="entry name" value="KALLIKREIN-RELATED"/>
    <property type="match status" value="1"/>
</dbReference>
<dbReference type="Pfam" id="PF00089">
    <property type="entry name" value="Trypsin"/>
    <property type="match status" value="1"/>
</dbReference>
<dbReference type="PRINTS" id="PR00722">
    <property type="entry name" value="CHYMOTRYPSIN"/>
</dbReference>
<dbReference type="SMART" id="SM00020">
    <property type="entry name" value="Tryp_SPc"/>
    <property type="match status" value="1"/>
</dbReference>
<dbReference type="SUPFAM" id="SSF50494">
    <property type="entry name" value="Trypsin-like serine proteases"/>
    <property type="match status" value="1"/>
</dbReference>
<dbReference type="PROSITE" id="PS50240">
    <property type="entry name" value="TRYPSIN_DOM"/>
    <property type="match status" value="1"/>
</dbReference>
<dbReference type="PROSITE" id="PS00134">
    <property type="entry name" value="TRYPSIN_HIS"/>
    <property type="match status" value="1"/>
</dbReference>
<dbReference type="PROSITE" id="PS00135">
    <property type="entry name" value="TRYPSIN_SER"/>
    <property type="match status" value="1"/>
</dbReference>
<feature type="signal peptide" evidence="3">
    <location>
        <begin position="1"/>
        <end position="18"/>
    </location>
</feature>
<feature type="propeptide" id="PRO_0000432330" evidence="2">
    <location>
        <begin position="19"/>
        <end position="24"/>
    </location>
</feature>
<feature type="chain" id="PRO_0000432331" description="Alpha-fibrinogenase-like">
    <location>
        <begin position="25"/>
        <end position="258"/>
    </location>
</feature>
<feature type="domain" description="Peptidase S1" evidence="4">
    <location>
        <begin position="25"/>
        <end position="249"/>
    </location>
</feature>
<feature type="active site" description="Charge relay system" evidence="1">
    <location>
        <position position="65"/>
    </location>
</feature>
<feature type="active site" description="Charge relay system" evidence="1">
    <location>
        <position position="110"/>
    </location>
</feature>
<feature type="active site" description="Charge relay system" evidence="1">
    <location>
        <position position="204"/>
    </location>
</feature>
<feature type="glycosylation site" description="N-linked (GlcNAc...) asparagine" evidence="3">
    <location>
        <position position="44"/>
    </location>
</feature>
<feature type="disulfide bond" evidence="4">
    <location>
        <begin position="31"/>
        <end position="163"/>
    </location>
</feature>
<feature type="disulfide bond" evidence="4">
    <location>
        <begin position="50"/>
        <end position="66"/>
    </location>
</feature>
<feature type="disulfide bond" evidence="4">
    <location>
        <begin position="98"/>
        <end position="256"/>
    </location>
</feature>
<feature type="disulfide bond" evidence="4">
    <location>
        <begin position="142"/>
        <end position="210"/>
    </location>
</feature>
<feature type="disulfide bond" evidence="4">
    <location>
        <begin position="174"/>
        <end position="189"/>
    </location>
</feature>
<feature type="disulfide bond" evidence="4">
    <location>
        <begin position="200"/>
        <end position="225"/>
    </location>
</feature>
<proteinExistence type="evidence at transcript level"/>
<reference key="1">
    <citation type="journal article" date="2011" name="Toxicon">
        <title>Phylogenetic analysis of serine proteases from Russell's viper (Daboia russelli siamensis) and Agkistrodon piscivorus leucostoma venom.</title>
        <authorList>
            <person name="Sukkapan P."/>
            <person name="Jia Y."/>
            <person name="Nuchprayoon I."/>
            <person name="Perez J.C."/>
        </authorList>
    </citation>
    <scope>NUCLEOTIDE SEQUENCE [MRNA]</scope>
    <source>
        <tissue>Venom gland</tissue>
    </source>
</reference>
<protein>
    <recommendedName>
        <fullName evidence="5">Alpha-fibrinogenase-like</fullName>
        <shortName evidence="5">RVAF</shortName>
        <ecNumber>3.4.21.-</ecNumber>
    </recommendedName>
    <alternativeName>
        <fullName evidence="6">Snake venom serine protease</fullName>
        <shortName evidence="6">SVSP</shortName>
    </alternativeName>
</protein>
<name>VSPAF_DABSI</name>
<comment type="function">
    <text evidence="2">Degrades alpha chain of fibrinogen (FGA), and has strong caseinolytic activity. Cleaves oxidized insulin B-chain at '40-Tyr-|-Leu-41', '48-Phe-|-Phe-49' and '49-Phe-|-Tyr-50', and glucagon at the bonds '62-Tyr-|-Ser-63', 66-Leu-|-Asp-67' and '78-Leu-|-Met-79' bonds.</text>
</comment>
<comment type="subunit">
    <text evidence="2">Monomer.</text>
</comment>
<comment type="subcellular location">
    <subcellularLocation>
        <location evidence="2">Secreted</location>
    </subcellularLocation>
</comment>
<comment type="tissue specificity">
    <text evidence="6">Expressed by the venom gland.</text>
</comment>
<comment type="similarity">
    <text evidence="6">Belongs to the peptidase S1 family. Snake venom subfamily.</text>
</comment>
<evidence type="ECO:0000250" key="1"/>
<evidence type="ECO:0000250" key="2">
    <source>
        <dbReference type="UniProtKB" id="Q8JH85"/>
    </source>
</evidence>
<evidence type="ECO:0000255" key="3"/>
<evidence type="ECO:0000255" key="4">
    <source>
        <dbReference type="PROSITE-ProRule" id="PRU00274"/>
    </source>
</evidence>
<evidence type="ECO:0000303" key="5">
    <source>
    </source>
</evidence>
<evidence type="ECO:0000305" key="6"/>
<accession>E5L0E3</accession>
<keyword id="KW-1015">Disulfide bond</keyword>
<keyword id="KW-1206">Fibrinogenolytic toxin</keyword>
<keyword id="KW-0325">Glycoprotein</keyword>
<keyword id="KW-1199">Hemostasis impairing toxin</keyword>
<keyword id="KW-0378">Hydrolase</keyword>
<keyword id="KW-0645">Protease</keyword>
<keyword id="KW-0964">Secreted</keyword>
<keyword id="KW-0720">Serine protease</keyword>
<keyword id="KW-0732">Signal</keyword>
<keyword id="KW-0800">Toxin</keyword>
<keyword id="KW-0865">Zymogen</keyword>